<proteinExistence type="inferred from homology"/>
<organism>
    <name type="scientific">Anaplasma marginale (strain Florida)</name>
    <dbReference type="NCBI Taxonomy" id="320483"/>
    <lineage>
        <taxon>Bacteria</taxon>
        <taxon>Pseudomonadati</taxon>
        <taxon>Pseudomonadota</taxon>
        <taxon>Alphaproteobacteria</taxon>
        <taxon>Rickettsiales</taxon>
        <taxon>Anaplasmataceae</taxon>
        <taxon>Anaplasma</taxon>
    </lineage>
</organism>
<accession>B9KIV1</accession>
<feature type="chain" id="PRO_1000133042" description="Probable GTP-binding protein EngB">
    <location>
        <begin position="1"/>
        <end position="205"/>
    </location>
</feature>
<feature type="domain" description="EngB-type G" evidence="1">
    <location>
        <begin position="21"/>
        <end position="196"/>
    </location>
</feature>
<feature type="binding site" evidence="1">
    <location>
        <begin position="29"/>
        <end position="36"/>
    </location>
    <ligand>
        <name>GTP</name>
        <dbReference type="ChEBI" id="CHEBI:37565"/>
    </ligand>
</feature>
<feature type="binding site" evidence="1">
    <location>
        <position position="36"/>
    </location>
    <ligand>
        <name>Mg(2+)</name>
        <dbReference type="ChEBI" id="CHEBI:18420"/>
    </ligand>
</feature>
<feature type="binding site" evidence="1">
    <location>
        <begin position="56"/>
        <end position="60"/>
    </location>
    <ligand>
        <name>GTP</name>
        <dbReference type="ChEBI" id="CHEBI:37565"/>
    </ligand>
</feature>
<feature type="binding site" evidence="1">
    <location>
        <position position="58"/>
    </location>
    <ligand>
        <name>Mg(2+)</name>
        <dbReference type="ChEBI" id="CHEBI:18420"/>
    </ligand>
</feature>
<feature type="binding site" evidence="1">
    <location>
        <begin position="74"/>
        <end position="77"/>
    </location>
    <ligand>
        <name>GTP</name>
        <dbReference type="ChEBI" id="CHEBI:37565"/>
    </ligand>
</feature>
<feature type="binding site" evidence="1">
    <location>
        <begin position="141"/>
        <end position="144"/>
    </location>
    <ligand>
        <name>GTP</name>
        <dbReference type="ChEBI" id="CHEBI:37565"/>
    </ligand>
</feature>
<feature type="binding site" evidence="1">
    <location>
        <begin position="172"/>
        <end position="177"/>
    </location>
    <ligand>
        <name>GTP</name>
        <dbReference type="ChEBI" id="CHEBI:37565"/>
    </ligand>
</feature>
<evidence type="ECO:0000255" key="1">
    <source>
        <dbReference type="HAMAP-Rule" id="MF_00321"/>
    </source>
</evidence>
<gene>
    <name evidence="1" type="primary">engB</name>
    <name type="ordered locus">AMF_566</name>
</gene>
<reference key="1">
    <citation type="journal article" date="2009" name="BMC Genomics">
        <title>Conservation in the face of diversity: multistrain analysis of an intracellular bacterium.</title>
        <authorList>
            <person name="Dark M.J."/>
            <person name="Herndon D.R."/>
            <person name="Kappmeyer L.S."/>
            <person name="Gonzales M.P."/>
            <person name="Nordeen E."/>
            <person name="Palmer G.H."/>
            <person name="Knowles D.P. Jr."/>
            <person name="Brayton K.A."/>
        </authorList>
    </citation>
    <scope>NUCLEOTIDE SEQUENCE [LARGE SCALE GENOMIC DNA]</scope>
    <source>
        <strain>Florida</strain>
    </source>
</reference>
<sequence length="205" mass="22588">MLSKCRFVAGVQDKHSLPDFQVPEVAFAGRSNVGKSSLINAVTKNKKGARVSSNPGSTRQINFYLNEGALALVDLPGYGYSKASKESASSYMSLVEHYLLTREALHRLVLLIDSKVGLKEVDMDFISWLEERCIHYSLVLTKIDRLACTEFNDVLSAVQSRVKGCCMLLHPIIGTSSKSGKGIKELVHEVSKCVKEWPGGRDVRA</sequence>
<dbReference type="EMBL" id="CP001079">
    <property type="protein sequence ID" value="ACM49413.1"/>
    <property type="molecule type" value="Genomic_DNA"/>
</dbReference>
<dbReference type="SMR" id="B9KIV1"/>
<dbReference type="STRING" id="320483.AMF_566"/>
<dbReference type="GeneID" id="7398011"/>
<dbReference type="KEGG" id="amf:AMF_566"/>
<dbReference type="eggNOG" id="COG0218">
    <property type="taxonomic scope" value="Bacteria"/>
</dbReference>
<dbReference type="HOGENOM" id="CLU_033732_2_0_5"/>
<dbReference type="Proteomes" id="UP000007307">
    <property type="component" value="Chromosome"/>
</dbReference>
<dbReference type="GO" id="GO:0005525">
    <property type="term" value="F:GTP binding"/>
    <property type="evidence" value="ECO:0007669"/>
    <property type="project" value="UniProtKB-UniRule"/>
</dbReference>
<dbReference type="GO" id="GO:0046872">
    <property type="term" value="F:metal ion binding"/>
    <property type="evidence" value="ECO:0007669"/>
    <property type="project" value="UniProtKB-KW"/>
</dbReference>
<dbReference type="GO" id="GO:0000917">
    <property type="term" value="P:division septum assembly"/>
    <property type="evidence" value="ECO:0007669"/>
    <property type="project" value="UniProtKB-KW"/>
</dbReference>
<dbReference type="CDD" id="cd01876">
    <property type="entry name" value="YihA_EngB"/>
    <property type="match status" value="1"/>
</dbReference>
<dbReference type="Gene3D" id="3.40.50.300">
    <property type="entry name" value="P-loop containing nucleotide triphosphate hydrolases"/>
    <property type="match status" value="1"/>
</dbReference>
<dbReference type="HAMAP" id="MF_00321">
    <property type="entry name" value="GTPase_EngB"/>
    <property type="match status" value="1"/>
</dbReference>
<dbReference type="InterPro" id="IPR030393">
    <property type="entry name" value="G_ENGB_dom"/>
</dbReference>
<dbReference type="InterPro" id="IPR006073">
    <property type="entry name" value="GTP-bd"/>
</dbReference>
<dbReference type="InterPro" id="IPR019987">
    <property type="entry name" value="GTP-bd_ribosome_bio_YsxC"/>
</dbReference>
<dbReference type="InterPro" id="IPR027417">
    <property type="entry name" value="P-loop_NTPase"/>
</dbReference>
<dbReference type="NCBIfam" id="TIGR03598">
    <property type="entry name" value="GTPase_YsxC"/>
    <property type="match status" value="1"/>
</dbReference>
<dbReference type="PANTHER" id="PTHR11649:SF13">
    <property type="entry name" value="ENGB-TYPE G DOMAIN-CONTAINING PROTEIN"/>
    <property type="match status" value="1"/>
</dbReference>
<dbReference type="PANTHER" id="PTHR11649">
    <property type="entry name" value="MSS1/TRME-RELATED GTP-BINDING PROTEIN"/>
    <property type="match status" value="1"/>
</dbReference>
<dbReference type="Pfam" id="PF01926">
    <property type="entry name" value="MMR_HSR1"/>
    <property type="match status" value="1"/>
</dbReference>
<dbReference type="SUPFAM" id="SSF52540">
    <property type="entry name" value="P-loop containing nucleoside triphosphate hydrolases"/>
    <property type="match status" value="1"/>
</dbReference>
<dbReference type="PROSITE" id="PS51706">
    <property type="entry name" value="G_ENGB"/>
    <property type="match status" value="1"/>
</dbReference>
<comment type="function">
    <text evidence="1">Necessary for normal cell division and for the maintenance of normal septation.</text>
</comment>
<comment type="cofactor">
    <cofactor evidence="1">
        <name>Mg(2+)</name>
        <dbReference type="ChEBI" id="CHEBI:18420"/>
    </cofactor>
</comment>
<comment type="similarity">
    <text evidence="1">Belongs to the TRAFAC class TrmE-Era-EngA-EngB-Septin-like GTPase superfamily. EngB GTPase family.</text>
</comment>
<name>ENGB_ANAMF</name>
<protein>
    <recommendedName>
        <fullName evidence="1">Probable GTP-binding protein EngB</fullName>
    </recommendedName>
</protein>
<keyword id="KW-0131">Cell cycle</keyword>
<keyword id="KW-0132">Cell division</keyword>
<keyword id="KW-0342">GTP-binding</keyword>
<keyword id="KW-0460">Magnesium</keyword>
<keyword id="KW-0479">Metal-binding</keyword>
<keyword id="KW-0547">Nucleotide-binding</keyword>
<keyword id="KW-1185">Reference proteome</keyword>
<keyword id="KW-0717">Septation</keyword>